<proteinExistence type="evidence at protein level"/>
<protein>
    <recommendedName>
        <fullName evidence="1">Thymidylate kinase</fullName>
        <ecNumber evidence="1">2.7.4.9</ecNumber>
    </recommendedName>
    <alternativeName>
        <fullName evidence="1">dTMP kinase</fullName>
    </alternativeName>
</protein>
<gene>
    <name evidence="1" type="primary">tmk</name>
    <name type="ordered locus">SA0440</name>
</gene>
<keyword id="KW-0002">3D-structure</keyword>
<keyword id="KW-0067">ATP-binding</keyword>
<keyword id="KW-0418">Kinase</keyword>
<keyword id="KW-0545">Nucleotide biosynthesis</keyword>
<keyword id="KW-0547">Nucleotide-binding</keyword>
<keyword id="KW-0808">Transferase</keyword>
<name>KTHY_STAAN</name>
<reference key="1">
    <citation type="journal article" date="2001" name="Lancet">
        <title>Whole genome sequencing of meticillin-resistant Staphylococcus aureus.</title>
        <authorList>
            <person name="Kuroda M."/>
            <person name="Ohta T."/>
            <person name="Uchiyama I."/>
            <person name="Baba T."/>
            <person name="Yuzawa H."/>
            <person name="Kobayashi I."/>
            <person name="Cui L."/>
            <person name="Oguchi A."/>
            <person name="Aoki K."/>
            <person name="Nagai Y."/>
            <person name="Lian J.-Q."/>
            <person name="Ito T."/>
            <person name="Kanamori M."/>
            <person name="Matsumaru H."/>
            <person name="Maruyama A."/>
            <person name="Murakami H."/>
            <person name="Hosoyama A."/>
            <person name="Mizutani-Ui Y."/>
            <person name="Takahashi N.K."/>
            <person name="Sawano T."/>
            <person name="Inoue R."/>
            <person name="Kaito C."/>
            <person name="Sekimizu K."/>
            <person name="Hirakawa H."/>
            <person name="Kuhara S."/>
            <person name="Goto S."/>
            <person name="Yabuzaki J."/>
            <person name="Kanehisa M."/>
            <person name="Yamashita A."/>
            <person name="Oshima K."/>
            <person name="Furuya K."/>
            <person name="Yoshino C."/>
            <person name="Shiba T."/>
            <person name="Hattori M."/>
            <person name="Ogasawara N."/>
            <person name="Hayashi H."/>
            <person name="Hiramatsu K."/>
        </authorList>
    </citation>
    <scope>NUCLEOTIDE SEQUENCE [LARGE SCALE GENOMIC DNA]</scope>
    <source>
        <strain>N315</strain>
    </source>
</reference>
<comment type="function">
    <text evidence="1">Phosphorylation of dTMP to form dTDP in both de novo and salvage pathways of dTTP synthesis.</text>
</comment>
<comment type="catalytic activity">
    <reaction evidence="1">
        <text>dTMP + ATP = dTDP + ADP</text>
        <dbReference type="Rhea" id="RHEA:13517"/>
        <dbReference type="ChEBI" id="CHEBI:30616"/>
        <dbReference type="ChEBI" id="CHEBI:58369"/>
        <dbReference type="ChEBI" id="CHEBI:63528"/>
        <dbReference type="ChEBI" id="CHEBI:456216"/>
        <dbReference type="EC" id="2.7.4.9"/>
    </reaction>
</comment>
<comment type="similarity">
    <text evidence="1">Belongs to the thymidylate kinase family.</text>
</comment>
<sequence>MSAFITFEGPEGSGKTTVINEVYHRLVKDYDVIMTREPGGVPTGEEIRKIVLEGNDMDIRTEAMLFAASRREHLVLKVIPALKEGKVVLCDRYIDSSLAYQGYARGIGVEEVRALNEFAINGLYPDLTIYLNVSAEVGRERIIKNSRDQNRLDQEDLKFHEKVIEGYQEIIHNESQRFKSVNADQPLENVVEDTYQTIIKYLEKI</sequence>
<feature type="chain" id="PRO_0000155340" description="Thymidylate kinase">
    <location>
        <begin position="1"/>
        <end position="205"/>
    </location>
</feature>
<feature type="binding site" evidence="1">
    <location>
        <begin position="9"/>
        <end position="16"/>
    </location>
    <ligand>
        <name>ATP</name>
        <dbReference type="ChEBI" id="CHEBI:30616"/>
    </ligand>
</feature>
<feature type="strand" evidence="2">
    <location>
        <begin position="3"/>
        <end position="8"/>
    </location>
</feature>
<feature type="helix" evidence="2">
    <location>
        <begin position="15"/>
        <end position="26"/>
    </location>
</feature>
<feature type="turn" evidence="2">
    <location>
        <begin position="27"/>
        <end position="29"/>
    </location>
</feature>
<feature type="strand" evidence="2">
    <location>
        <begin position="32"/>
        <end position="38"/>
    </location>
</feature>
<feature type="helix" evidence="2">
    <location>
        <begin position="42"/>
        <end position="52"/>
    </location>
</feature>
<feature type="helix" evidence="2">
    <location>
        <begin position="59"/>
        <end position="76"/>
    </location>
</feature>
<feature type="helix" evidence="2">
    <location>
        <begin position="78"/>
        <end position="83"/>
    </location>
</feature>
<feature type="strand" evidence="2">
    <location>
        <begin position="87"/>
        <end position="92"/>
    </location>
</feature>
<feature type="helix" evidence="2">
    <location>
        <begin position="94"/>
        <end position="100"/>
    </location>
</feature>
<feature type="turn" evidence="2">
    <location>
        <begin position="101"/>
        <end position="105"/>
    </location>
</feature>
<feature type="helix" evidence="2">
    <location>
        <begin position="109"/>
        <end position="120"/>
    </location>
</feature>
<feature type="strand" evidence="2">
    <location>
        <begin position="126"/>
        <end position="132"/>
    </location>
</feature>
<feature type="helix" evidence="2">
    <location>
        <begin position="135"/>
        <end position="144"/>
    </location>
</feature>
<feature type="helix" evidence="2">
    <location>
        <begin position="154"/>
        <end position="173"/>
    </location>
</feature>
<feature type="strand" evidence="2">
    <location>
        <begin position="176"/>
        <end position="182"/>
    </location>
</feature>
<feature type="helix" evidence="2">
    <location>
        <begin position="187"/>
        <end position="202"/>
    </location>
</feature>
<dbReference type="EC" id="2.7.4.9" evidence="1"/>
<dbReference type="EMBL" id="BA000018">
    <property type="protein sequence ID" value="BAB41670.1"/>
    <property type="molecule type" value="Genomic_DNA"/>
</dbReference>
<dbReference type="PIR" id="C89814">
    <property type="entry name" value="C89814"/>
</dbReference>
<dbReference type="RefSeq" id="WP_001272126.1">
    <property type="nucleotide sequence ID" value="NC_002745.2"/>
</dbReference>
<dbReference type="PDB" id="4HDC">
    <property type="method" value="X-ray"/>
    <property type="resolution" value="2.05 A"/>
    <property type="chains" value="A/B=1-205"/>
</dbReference>
<dbReference type="PDB" id="4HEJ">
    <property type="method" value="X-ray"/>
    <property type="resolution" value="2.00 A"/>
    <property type="chains" value="A/B=1-205"/>
</dbReference>
<dbReference type="PDBsum" id="4HDC"/>
<dbReference type="PDBsum" id="4HEJ"/>
<dbReference type="SMR" id="P65249"/>
<dbReference type="EnsemblBacteria" id="BAB41670">
    <property type="protein sequence ID" value="BAB41670"/>
    <property type="gene ID" value="BAB41670"/>
</dbReference>
<dbReference type="GeneID" id="98344796"/>
<dbReference type="KEGG" id="sau:SA0440"/>
<dbReference type="HOGENOM" id="CLU_049131_0_2_9"/>
<dbReference type="EvolutionaryTrace" id="P65249"/>
<dbReference type="PRO" id="PR:P65249"/>
<dbReference type="GO" id="GO:0005829">
    <property type="term" value="C:cytosol"/>
    <property type="evidence" value="ECO:0007669"/>
    <property type="project" value="TreeGrafter"/>
</dbReference>
<dbReference type="GO" id="GO:0005524">
    <property type="term" value="F:ATP binding"/>
    <property type="evidence" value="ECO:0007669"/>
    <property type="project" value="UniProtKB-UniRule"/>
</dbReference>
<dbReference type="GO" id="GO:0004798">
    <property type="term" value="F:dTMP kinase activity"/>
    <property type="evidence" value="ECO:0007669"/>
    <property type="project" value="UniProtKB-UniRule"/>
</dbReference>
<dbReference type="GO" id="GO:0006233">
    <property type="term" value="P:dTDP biosynthetic process"/>
    <property type="evidence" value="ECO:0007669"/>
    <property type="project" value="InterPro"/>
</dbReference>
<dbReference type="GO" id="GO:0006235">
    <property type="term" value="P:dTTP biosynthetic process"/>
    <property type="evidence" value="ECO:0007669"/>
    <property type="project" value="UniProtKB-UniRule"/>
</dbReference>
<dbReference type="GO" id="GO:0006227">
    <property type="term" value="P:dUDP biosynthetic process"/>
    <property type="evidence" value="ECO:0007669"/>
    <property type="project" value="TreeGrafter"/>
</dbReference>
<dbReference type="CDD" id="cd01672">
    <property type="entry name" value="TMPK"/>
    <property type="match status" value="1"/>
</dbReference>
<dbReference type="FunFam" id="3.40.50.300:FF:000225">
    <property type="entry name" value="Thymidylate kinase"/>
    <property type="match status" value="1"/>
</dbReference>
<dbReference type="Gene3D" id="3.40.50.300">
    <property type="entry name" value="P-loop containing nucleotide triphosphate hydrolases"/>
    <property type="match status" value="1"/>
</dbReference>
<dbReference type="HAMAP" id="MF_00165">
    <property type="entry name" value="Thymidylate_kinase"/>
    <property type="match status" value="1"/>
</dbReference>
<dbReference type="InterPro" id="IPR027417">
    <property type="entry name" value="P-loop_NTPase"/>
</dbReference>
<dbReference type="InterPro" id="IPR039430">
    <property type="entry name" value="Thymidylate_kin-like_dom"/>
</dbReference>
<dbReference type="InterPro" id="IPR018095">
    <property type="entry name" value="Thymidylate_kin_CS"/>
</dbReference>
<dbReference type="InterPro" id="IPR018094">
    <property type="entry name" value="Thymidylate_kinase"/>
</dbReference>
<dbReference type="NCBIfam" id="TIGR00041">
    <property type="entry name" value="DTMP_kinase"/>
    <property type="match status" value="1"/>
</dbReference>
<dbReference type="PANTHER" id="PTHR10344">
    <property type="entry name" value="THYMIDYLATE KINASE"/>
    <property type="match status" value="1"/>
</dbReference>
<dbReference type="PANTHER" id="PTHR10344:SF4">
    <property type="entry name" value="UMP-CMP KINASE 2, MITOCHONDRIAL"/>
    <property type="match status" value="1"/>
</dbReference>
<dbReference type="Pfam" id="PF02223">
    <property type="entry name" value="Thymidylate_kin"/>
    <property type="match status" value="1"/>
</dbReference>
<dbReference type="SUPFAM" id="SSF52540">
    <property type="entry name" value="P-loop containing nucleoside triphosphate hydrolases"/>
    <property type="match status" value="1"/>
</dbReference>
<dbReference type="PROSITE" id="PS01331">
    <property type="entry name" value="THYMIDYLATE_KINASE"/>
    <property type="match status" value="1"/>
</dbReference>
<accession>P65249</accession>
<accession>Q99WC1</accession>
<evidence type="ECO:0000255" key="1">
    <source>
        <dbReference type="HAMAP-Rule" id="MF_00165"/>
    </source>
</evidence>
<evidence type="ECO:0007829" key="2">
    <source>
        <dbReference type="PDB" id="4HEJ"/>
    </source>
</evidence>
<organism>
    <name type="scientific">Staphylococcus aureus (strain N315)</name>
    <dbReference type="NCBI Taxonomy" id="158879"/>
    <lineage>
        <taxon>Bacteria</taxon>
        <taxon>Bacillati</taxon>
        <taxon>Bacillota</taxon>
        <taxon>Bacilli</taxon>
        <taxon>Bacillales</taxon>
        <taxon>Staphylococcaceae</taxon>
        <taxon>Staphylococcus</taxon>
    </lineage>
</organism>